<reference key="1">
    <citation type="submission" date="2005-01" db="EMBL/GenBank/DDBJ databases">
        <title>Analysis of sequences obtained from constructed full-length bovine cDNA libraries.</title>
        <authorList>
            <person name="Yu J."/>
            <person name="Meng Y."/>
            <person name="Wang Z."/>
            <person name="Hansen C."/>
            <person name="Li C."/>
            <person name="Moore S.S."/>
        </authorList>
    </citation>
    <scope>NUCLEOTIDE SEQUENCE [LARGE SCALE MRNA]</scope>
    <source>
        <tissue>Lymphoid epithelium</tissue>
    </source>
</reference>
<reference key="2">
    <citation type="submission" date="2007-06" db="EMBL/GenBank/DDBJ databases">
        <authorList>
            <consortium name="NIH - Mammalian Gene Collection (MGC) project"/>
        </authorList>
    </citation>
    <scope>NUCLEOTIDE SEQUENCE [LARGE SCALE MRNA]</scope>
    <source>
        <strain>Hereford</strain>
        <tissue>Fetal lung</tissue>
        <tissue>Mammary gland</tissue>
    </source>
</reference>
<sequence length="145" mass="17258">MKFNPFVTSDRSKNRKRHFNAPSHIRRKIMSSPLSKELRQKYNVRSMPIRKDDEVQVVRGHYKGQQIGKVVQVYRKKYVIYIERVQREKANGTTVHVGIHPSKVVITRLKLDKDRKKILERKAKSRQVGKEKGKYKEETIEKMQE</sequence>
<protein>
    <recommendedName>
        <fullName evidence="3">Large ribosomal subunit protein uL24</fullName>
    </recommendedName>
    <alternativeName>
        <fullName>60S ribosomal protein L26</fullName>
    </alternativeName>
</protein>
<dbReference type="EMBL" id="AY911370">
    <property type="protein sequence ID" value="AAW82134.1"/>
    <property type="molecule type" value="mRNA"/>
</dbReference>
<dbReference type="EMBL" id="BC102057">
    <property type="protein sequence ID" value="AAI02058.1"/>
    <property type="molecule type" value="mRNA"/>
</dbReference>
<dbReference type="EMBL" id="BC141993">
    <property type="protein sequence ID" value="AAI41994.1"/>
    <property type="molecule type" value="mRNA"/>
</dbReference>
<dbReference type="RefSeq" id="NP_001015512.1">
    <property type="nucleotide sequence ID" value="NM_001015512.3"/>
</dbReference>
<dbReference type="SMR" id="P61257"/>
<dbReference type="FunCoup" id="P61257">
    <property type="interactions" value="2656"/>
</dbReference>
<dbReference type="STRING" id="9913.ENSBTAP00000016378"/>
<dbReference type="PaxDb" id="9913-ENSBTAP00000016378"/>
<dbReference type="PeptideAtlas" id="P61257"/>
<dbReference type="GeneID" id="337890"/>
<dbReference type="KEGG" id="bta:337890"/>
<dbReference type="CTD" id="6154"/>
<dbReference type="VEuPathDB" id="HostDB:ENSBTAG00000012344"/>
<dbReference type="eggNOG" id="KOG3401">
    <property type="taxonomic scope" value="Eukaryota"/>
</dbReference>
<dbReference type="HOGENOM" id="CLU_093240_0_0_1"/>
<dbReference type="InParanoid" id="P61257"/>
<dbReference type="OMA" id="VRIMRGD"/>
<dbReference type="OrthoDB" id="9827408at2759"/>
<dbReference type="TreeFam" id="TF300236"/>
<dbReference type="Reactome" id="R-BTA-156827">
    <property type="pathway name" value="L13a-mediated translational silencing of Ceruloplasmin expression"/>
</dbReference>
<dbReference type="Reactome" id="R-BTA-1799339">
    <property type="pathway name" value="SRP-dependent cotranslational protein targeting to membrane"/>
</dbReference>
<dbReference type="Reactome" id="R-BTA-6791226">
    <property type="pathway name" value="Major pathway of rRNA processing in the nucleolus and cytosol"/>
</dbReference>
<dbReference type="Reactome" id="R-BTA-72689">
    <property type="pathway name" value="Formation of a pool of free 40S subunits"/>
</dbReference>
<dbReference type="Reactome" id="R-BTA-72706">
    <property type="pathway name" value="GTP hydrolysis and joining of the 60S ribosomal subunit"/>
</dbReference>
<dbReference type="Reactome" id="R-BTA-975956">
    <property type="pathway name" value="Nonsense Mediated Decay (NMD) independent of the Exon Junction Complex (EJC)"/>
</dbReference>
<dbReference type="Reactome" id="R-BTA-975957">
    <property type="pathway name" value="Nonsense Mediated Decay (NMD) enhanced by the Exon Junction Complex (EJC)"/>
</dbReference>
<dbReference type="Proteomes" id="UP000009136">
    <property type="component" value="Chromosome 19"/>
</dbReference>
<dbReference type="Bgee" id="ENSBTAG00000012344">
    <property type="expression patterns" value="Expressed in isthmus of fallopian tube and 105 other cell types or tissues"/>
</dbReference>
<dbReference type="GO" id="GO:0022625">
    <property type="term" value="C:cytosolic large ribosomal subunit"/>
    <property type="evidence" value="ECO:0000318"/>
    <property type="project" value="GO_Central"/>
</dbReference>
<dbReference type="GO" id="GO:0043231">
    <property type="term" value="C:intracellular membrane-bounded organelle"/>
    <property type="evidence" value="ECO:0007669"/>
    <property type="project" value="UniProtKB-ARBA"/>
</dbReference>
<dbReference type="GO" id="GO:0031090">
    <property type="term" value="C:organelle membrane"/>
    <property type="evidence" value="ECO:0007669"/>
    <property type="project" value="UniProtKB-ARBA"/>
</dbReference>
<dbReference type="GO" id="GO:0003723">
    <property type="term" value="F:RNA binding"/>
    <property type="evidence" value="ECO:0000318"/>
    <property type="project" value="GO_Central"/>
</dbReference>
<dbReference type="GO" id="GO:0003735">
    <property type="term" value="F:structural constituent of ribosome"/>
    <property type="evidence" value="ECO:0000318"/>
    <property type="project" value="GO_Central"/>
</dbReference>
<dbReference type="GO" id="GO:0002181">
    <property type="term" value="P:cytoplasmic translation"/>
    <property type="evidence" value="ECO:0000318"/>
    <property type="project" value="GO_Central"/>
</dbReference>
<dbReference type="GO" id="GO:0042273">
    <property type="term" value="P:ribosomal large subunit biogenesis"/>
    <property type="evidence" value="ECO:0000318"/>
    <property type="project" value="GO_Central"/>
</dbReference>
<dbReference type="CDD" id="cd06089">
    <property type="entry name" value="KOW_RPL26"/>
    <property type="match status" value="1"/>
</dbReference>
<dbReference type="FunFam" id="2.30.30.30:FF:000009">
    <property type="entry name" value="60S ribosomal protein L26"/>
    <property type="match status" value="1"/>
</dbReference>
<dbReference type="Gene3D" id="2.30.30.30">
    <property type="match status" value="1"/>
</dbReference>
<dbReference type="HAMAP" id="MF_01326_A">
    <property type="entry name" value="Ribosomal_uL24_A"/>
    <property type="match status" value="1"/>
</dbReference>
<dbReference type="InterPro" id="IPR005824">
    <property type="entry name" value="KOW"/>
</dbReference>
<dbReference type="InterPro" id="IPR014722">
    <property type="entry name" value="Rib_uL2_dom2"/>
</dbReference>
<dbReference type="InterPro" id="IPR005825">
    <property type="entry name" value="Ribosomal_uL24_CS"/>
</dbReference>
<dbReference type="InterPro" id="IPR005756">
    <property type="entry name" value="Ribosomal_uL24_euk/arc"/>
</dbReference>
<dbReference type="InterPro" id="IPR041988">
    <property type="entry name" value="Ribosomal_uL24_KOW"/>
</dbReference>
<dbReference type="InterPro" id="IPR008991">
    <property type="entry name" value="Translation_prot_SH3-like_sf"/>
</dbReference>
<dbReference type="NCBIfam" id="TIGR01080">
    <property type="entry name" value="rplX_A_E"/>
    <property type="match status" value="1"/>
</dbReference>
<dbReference type="PANTHER" id="PTHR11143">
    <property type="entry name" value="60S RIBOSOMAL PROTEIN L26 FAMILY MEMBER"/>
    <property type="match status" value="1"/>
</dbReference>
<dbReference type="Pfam" id="PF00467">
    <property type="entry name" value="KOW"/>
    <property type="match status" value="1"/>
</dbReference>
<dbReference type="Pfam" id="PF16906">
    <property type="entry name" value="Ribosomal_L26"/>
    <property type="match status" value="1"/>
</dbReference>
<dbReference type="SMART" id="SM00739">
    <property type="entry name" value="KOW"/>
    <property type="match status" value="1"/>
</dbReference>
<dbReference type="SUPFAM" id="SSF50104">
    <property type="entry name" value="Translation proteins SH3-like domain"/>
    <property type="match status" value="1"/>
</dbReference>
<dbReference type="PROSITE" id="PS01108">
    <property type="entry name" value="RIBOSOMAL_L24"/>
    <property type="match status" value="1"/>
</dbReference>
<proteinExistence type="evidence at transcript level"/>
<name>RL26_BOVIN</name>
<comment type="function">
    <text evidence="1">Component of the large ribosomal subunit. The ribosome is a large ribonucleoprotein complex responsible for the synthesis of proteins in the cell.</text>
</comment>
<comment type="subunit">
    <text evidence="1">Component of the large ribosomal subunit. Interacts with DHX33.</text>
</comment>
<comment type="subcellular location">
    <subcellularLocation>
        <location evidence="1">Cytoplasm</location>
    </subcellularLocation>
</comment>
<comment type="PTM">
    <text evidence="1">Ufmylated by UFL1 in response to endoplasmic reticulum stress, promoting reticulophagy of endoplasmic reticulum sheets.</text>
</comment>
<comment type="similarity">
    <text evidence="3">Belongs to the universal ribosomal protein uL24 family.</text>
</comment>
<accession>P61257</accession>
<accession>A5PJ74</accession>
<accession>Q3T198</accession>
<accession>Q56JW1</accession>
<gene>
    <name type="primary">RPL26</name>
</gene>
<feature type="chain" id="PRO_0000130786" description="Large ribosomal subunit protein uL24">
    <location>
        <begin position="1"/>
        <end position="145"/>
    </location>
</feature>
<feature type="region of interest" description="Disordered" evidence="2">
    <location>
        <begin position="1"/>
        <end position="21"/>
    </location>
</feature>
<feature type="region of interest" description="Disordered" evidence="2">
    <location>
        <begin position="122"/>
        <end position="145"/>
    </location>
</feature>
<feature type="modified residue" description="Phosphothreonine" evidence="1">
    <location>
        <position position="139"/>
    </location>
</feature>
<feature type="cross-link" description="Glycyl lysine isopeptide (Lys-Gly) (interchain with G-Cter in SUMO2)" evidence="1">
    <location>
        <position position="136"/>
    </location>
</feature>
<evidence type="ECO:0000250" key="1">
    <source>
        <dbReference type="UniProtKB" id="P61254"/>
    </source>
</evidence>
<evidence type="ECO:0000256" key="2">
    <source>
        <dbReference type="SAM" id="MobiDB-lite"/>
    </source>
</evidence>
<evidence type="ECO:0000305" key="3"/>
<keyword id="KW-0963">Cytoplasm</keyword>
<keyword id="KW-1017">Isopeptide bond</keyword>
<keyword id="KW-0597">Phosphoprotein</keyword>
<keyword id="KW-1185">Reference proteome</keyword>
<keyword id="KW-0687">Ribonucleoprotein</keyword>
<keyword id="KW-0689">Ribosomal protein</keyword>
<keyword id="KW-0832">Ubl conjugation</keyword>
<organism>
    <name type="scientific">Bos taurus</name>
    <name type="common">Bovine</name>
    <dbReference type="NCBI Taxonomy" id="9913"/>
    <lineage>
        <taxon>Eukaryota</taxon>
        <taxon>Metazoa</taxon>
        <taxon>Chordata</taxon>
        <taxon>Craniata</taxon>
        <taxon>Vertebrata</taxon>
        <taxon>Euteleostomi</taxon>
        <taxon>Mammalia</taxon>
        <taxon>Eutheria</taxon>
        <taxon>Laurasiatheria</taxon>
        <taxon>Artiodactyla</taxon>
        <taxon>Ruminantia</taxon>
        <taxon>Pecora</taxon>
        <taxon>Bovidae</taxon>
        <taxon>Bovinae</taxon>
        <taxon>Bos</taxon>
    </lineage>
</organism>